<dbReference type="EMBL" id="U02281">
    <property type="protein sequence ID" value="AAA21322.1"/>
    <property type="molecule type" value="Genomic_DNA"/>
</dbReference>
<dbReference type="EMBL" id="AY775359">
    <property type="protein sequence ID" value="AAV92881.1"/>
    <property type="molecule type" value="Genomic_DNA"/>
</dbReference>
<dbReference type="EMBL" id="AE006468">
    <property type="protein sequence ID" value="AAL21205.1"/>
    <property type="molecule type" value="Genomic_DNA"/>
</dbReference>
<dbReference type="EMBL" id="AF036677">
    <property type="protein sequence ID" value="AAC04777.1"/>
    <property type="molecule type" value="Genomic_DNA"/>
</dbReference>
<dbReference type="RefSeq" id="NP_461246.1">
    <property type="nucleotide sequence ID" value="NC_003197.2"/>
</dbReference>
<dbReference type="RefSeq" id="WP_000455132.1">
    <property type="nucleotide sequence ID" value="NC_003197.2"/>
</dbReference>
<dbReference type="SMR" id="P37589"/>
<dbReference type="STRING" id="99287.STM2304"/>
<dbReference type="PaxDb" id="99287-STM2304"/>
<dbReference type="GeneID" id="1253826"/>
<dbReference type="KEGG" id="stm:STM2304"/>
<dbReference type="PATRIC" id="fig|99287.12.peg.2439"/>
<dbReference type="HOGENOM" id="CLU_192298_0_0_6"/>
<dbReference type="OMA" id="WWVKKVR"/>
<dbReference type="BioCyc" id="SENT99287:STM2304-MONOMER"/>
<dbReference type="Proteomes" id="UP000001014">
    <property type="component" value="Chromosome"/>
</dbReference>
<dbReference type="GO" id="GO:0046677">
    <property type="term" value="P:response to antibiotic"/>
    <property type="evidence" value="ECO:0007669"/>
    <property type="project" value="UniProtKB-KW"/>
</dbReference>
<dbReference type="Gene3D" id="2.40.50.650">
    <property type="match status" value="1"/>
</dbReference>
<dbReference type="InterPro" id="IPR044854">
    <property type="entry name" value="PmrD_dom"/>
</dbReference>
<dbReference type="InterPro" id="IPR038679">
    <property type="entry name" value="PmrD_sf"/>
</dbReference>
<dbReference type="NCBIfam" id="NF011994">
    <property type="entry name" value="PRK15450.1"/>
    <property type="match status" value="1"/>
</dbReference>
<dbReference type="Pfam" id="PF11183">
    <property type="entry name" value="PmrD"/>
    <property type="match status" value="1"/>
</dbReference>
<accession>P37589</accession>
<accession>Q5MJT5</accession>
<accession>Q7BUV6</accession>
<proteinExistence type="evidence at transcript level"/>
<protein>
    <recommendedName>
        <fullName>Signal transduction protein PmrD</fullName>
    </recommendedName>
    <alternativeName>
        <fullName>BasR post-transcriptional activator</fullName>
    </alternativeName>
    <alternativeName>
        <fullName>Polymyxin resistance protein PmrD</fullName>
    </alternativeName>
</protein>
<comment type="function">
    <text evidence="1 2 3">Interacts with phosphorylated BasR protein to mediate transcriptional induction of BasR-activated genes to induce polymyxin resistance.</text>
</comment>
<comment type="induction">
    <text evidence="1 2 3 4">By PhoP. Repressed by BasR.</text>
</comment>
<comment type="similarity">
    <text evidence="5">Belongs to the PmrD family.</text>
</comment>
<sequence>MEWLVKKSHYVKKRACHVLVLCDSGGSLKMIAEANSMILLSPGDILSPLQDAQYCINREKHQTLKIVDARCYSCDEWQRLTRKPS</sequence>
<feature type="chain" id="PRO_0000058469" description="Signal transduction protein PmrD">
    <location>
        <begin position="1"/>
        <end position="85"/>
    </location>
</feature>
<organism>
    <name type="scientific">Salmonella typhimurium (strain LT2 / SGSC1412 / ATCC 700720)</name>
    <dbReference type="NCBI Taxonomy" id="99287"/>
    <lineage>
        <taxon>Bacteria</taxon>
        <taxon>Pseudomonadati</taxon>
        <taxon>Pseudomonadota</taxon>
        <taxon>Gammaproteobacteria</taxon>
        <taxon>Enterobacterales</taxon>
        <taxon>Enterobacteriaceae</taxon>
        <taxon>Salmonella</taxon>
    </lineage>
</organism>
<keyword id="KW-0046">Antibiotic resistance</keyword>
<keyword id="KW-1185">Reference proteome</keyword>
<name>PMRD_SALTY</name>
<gene>
    <name type="primary">pmrD</name>
    <name type="synonym">pbgE2</name>
    <name type="ordered locus">STM2304</name>
</gene>
<evidence type="ECO:0000269" key="1">
    <source>
    </source>
</evidence>
<evidence type="ECO:0000269" key="2">
    <source>
    </source>
</evidence>
<evidence type="ECO:0000269" key="3">
    <source>
    </source>
</evidence>
<evidence type="ECO:0000269" key="4">
    <source>
    </source>
</evidence>
<evidence type="ECO:0000305" key="5"/>
<reference key="1">
    <citation type="journal article" date="1994" name="J. Bacteriol.">
        <title>Isolation and characterization of a gene, pmrD, from Salmonella typhimurium that confers resistance to polymyxin when expressed in multiple copies.</title>
        <authorList>
            <person name="Roland K.L."/>
            <person name="Esther C.R."/>
            <person name="Spitznagel J.K."/>
        </authorList>
    </citation>
    <scope>NUCLEOTIDE SEQUENCE [GENOMIC DNA]</scope>
    <source>
        <strain>LT2</strain>
    </source>
</reference>
<reference key="2">
    <citation type="journal article" date="2004" name="Proc. Natl. Acad. Sci. U.S.A.">
        <title>Phenotypic differences between Salmonella and Escherichia coli resulting from the disparate regulation of homologous genes.</title>
        <authorList>
            <person name="Winfield M.D."/>
            <person name="Groisman E.A."/>
        </authorList>
    </citation>
    <scope>NUCLEOTIDE SEQUENCE [GENOMIC DNA]</scope>
    <scope>INDUCTION BY PHOP</scope>
    <source>
        <strain>S4194</strain>
    </source>
</reference>
<reference key="3">
    <citation type="journal article" date="2001" name="Nature">
        <title>Complete genome sequence of Salmonella enterica serovar Typhimurium LT2.</title>
        <authorList>
            <person name="McClelland M."/>
            <person name="Sanderson K.E."/>
            <person name="Spieth J."/>
            <person name="Clifton S.W."/>
            <person name="Latreille P."/>
            <person name="Courtney L."/>
            <person name="Porwollik S."/>
            <person name="Ali J."/>
            <person name="Dante M."/>
            <person name="Du F."/>
            <person name="Hou S."/>
            <person name="Layman D."/>
            <person name="Leonard S."/>
            <person name="Nguyen C."/>
            <person name="Scott K."/>
            <person name="Holmes A."/>
            <person name="Grewal N."/>
            <person name="Mulvaney E."/>
            <person name="Ryan E."/>
            <person name="Sun H."/>
            <person name="Florea L."/>
            <person name="Miller W."/>
            <person name="Stoneking T."/>
            <person name="Nhan M."/>
            <person name="Waterston R."/>
            <person name="Wilson R.K."/>
        </authorList>
    </citation>
    <scope>NUCLEOTIDE SEQUENCE [LARGE SCALE GENOMIC DNA]</scope>
    <source>
        <strain>LT2 / SGSC1412 / ATCC 700720</strain>
    </source>
</reference>
<reference key="4">
    <citation type="journal article" date="1998" name="Mol. Microbiol.">
        <title>PmrA-PmrB-regulated genes necessary for 4-aminoarabinose lipid A modification and polymyxin resistance.</title>
        <authorList>
            <person name="Gunn J.S."/>
            <person name="Lim K.B."/>
            <person name="Krueger J."/>
            <person name="Kim K."/>
            <person name="Guo L."/>
            <person name="Hackett M."/>
            <person name="Miller S.I."/>
        </authorList>
    </citation>
    <scope>NUCLEOTIDE SEQUENCE [GENOMIC DNA] OF 41-85</scope>
    <source>
        <strain>ATCC 14028s / SGSG 2262</strain>
    </source>
</reference>
<reference key="5">
    <citation type="journal article" date="2000" name="EMBO J.">
        <title>A small protein that mediates the activation of a two-component system by another two-component system.</title>
        <authorList>
            <person name="Kox L.F.F."/>
            <person name="Woesten M.M.S.M."/>
            <person name="Groisman E.A."/>
        </authorList>
    </citation>
    <scope>FUNCTION</scope>
    <scope>INDUCTION BY PHOP</scope>
    <source>
        <strain>ATCC 14028s / SGSG 2262</strain>
    </source>
</reference>
<reference key="6">
    <citation type="journal article" date="2003" name="Proc. Natl. Acad. Sci. U.S.A.">
        <title>Closing the loop: the PmrA/PmrB two-component system negatively controls expression of its posttranscriptional activator PmrD.</title>
        <authorList>
            <person name="Kato A."/>
            <person name="Latifi T."/>
            <person name="Groisman E.A."/>
        </authorList>
    </citation>
    <scope>FUNCTION</scope>
    <scope>REPRESSION BY BASR</scope>
    <source>
        <strain>ATCC 14028s / SGSG 2262</strain>
    </source>
</reference>
<reference key="7">
    <citation type="journal article" date="2004" name="Genes Dev.">
        <title>Connecting two-component regulatory systems by a protein that protects a response regulator from dephosphorylation by its cognate sensor.</title>
        <authorList>
            <person name="Kato A."/>
            <person name="Groisman E.A."/>
        </authorList>
    </citation>
    <scope>FUNCTION</scope>
    <scope>INDUCTION BY PHOP</scope>
    <source>
        <strain>ATCC 14028s / SGSG 2262</strain>
    </source>
</reference>